<gene>
    <name type="ordered locus">Bind_0345</name>
</gene>
<protein>
    <recommendedName>
        <fullName evidence="1">Probable transcriptional regulatory protein Bind_0345</fullName>
    </recommendedName>
</protein>
<evidence type="ECO:0000255" key="1">
    <source>
        <dbReference type="HAMAP-Rule" id="MF_00693"/>
    </source>
</evidence>
<accession>B2IDE7</accession>
<name>Y345_BEII9</name>
<dbReference type="EMBL" id="CP001016">
    <property type="protein sequence ID" value="ACB93999.1"/>
    <property type="molecule type" value="Genomic_DNA"/>
</dbReference>
<dbReference type="RefSeq" id="WP_012383357.1">
    <property type="nucleotide sequence ID" value="NC_010581.1"/>
</dbReference>
<dbReference type="SMR" id="B2IDE7"/>
<dbReference type="STRING" id="395963.Bind_0345"/>
<dbReference type="KEGG" id="bid:Bind_0345"/>
<dbReference type="eggNOG" id="COG0217">
    <property type="taxonomic scope" value="Bacteria"/>
</dbReference>
<dbReference type="HOGENOM" id="CLU_062974_2_2_5"/>
<dbReference type="OrthoDB" id="9781053at2"/>
<dbReference type="Proteomes" id="UP000001695">
    <property type="component" value="Chromosome"/>
</dbReference>
<dbReference type="GO" id="GO:0005829">
    <property type="term" value="C:cytosol"/>
    <property type="evidence" value="ECO:0007669"/>
    <property type="project" value="TreeGrafter"/>
</dbReference>
<dbReference type="GO" id="GO:0003677">
    <property type="term" value="F:DNA binding"/>
    <property type="evidence" value="ECO:0007669"/>
    <property type="project" value="UniProtKB-UniRule"/>
</dbReference>
<dbReference type="GO" id="GO:0006355">
    <property type="term" value="P:regulation of DNA-templated transcription"/>
    <property type="evidence" value="ECO:0007669"/>
    <property type="project" value="UniProtKB-UniRule"/>
</dbReference>
<dbReference type="FunFam" id="1.10.10.200:FF:000002">
    <property type="entry name" value="Probable transcriptional regulatory protein CLM62_37755"/>
    <property type="match status" value="1"/>
</dbReference>
<dbReference type="Gene3D" id="1.10.10.200">
    <property type="match status" value="1"/>
</dbReference>
<dbReference type="Gene3D" id="3.30.70.980">
    <property type="match status" value="2"/>
</dbReference>
<dbReference type="HAMAP" id="MF_00693">
    <property type="entry name" value="Transcrip_reg_TACO1"/>
    <property type="match status" value="1"/>
</dbReference>
<dbReference type="InterPro" id="IPR017856">
    <property type="entry name" value="Integrase-like_N"/>
</dbReference>
<dbReference type="InterPro" id="IPR048300">
    <property type="entry name" value="TACO1_YebC-like_2nd/3rd_dom"/>
</dbReference>
<dbReference type="InterPro" id="IPR049083">
    <property type="entry name" value="TACO1_YebC_N"/>
</dbReference>
<dbReference type="InterPro" id="IPR002876">
    <property type="entry name" value="Transcrip_reg_TACO1-like"/>
</dbReference>
<dbReference type="InterPro" id="IPR026564">
    <property type="entry name" value="Transcrip_reg_TACO1-like_dom3"/>
</dbReference>
<dbReference type="InterPro" id="IPR029072">
    <property type="entry name" value="YebC-like"/>
</dbReference>
<dbReference type="NCBIfam" id="NF001030">
    <property type="entry name" value="PRK00110.1"/>
    <property type="match status" value="1"/>
</dbReference>
<dbReference type="NCBIfam" id="NF009044">
    <property type="entry name" value="PRK12378.1"/>
    <property type="match status" value="1"/>
</dbReference>
<dbReference type="NCBIfam" id="TIGR01033">
    <property type="entry name" value="YebC/PmpR family DNA-binding transcriptional regulator"/>
    <property type="match status" value="1"/>
</dbReference>
<dbReference type="PANTHER" id="PTHR12532:SF6">
    <property type="entry name" value="TRANSCRIPTIONAL REGULATORY PROTEIN YEBC-RELATED"/>
    <property type="match status" value="1"/>
</dbReference>
<dbReference type="PANTHER" id="PTHR12532">
    <property type="entry name" value="TRANSLATIONAL ACTIVATOR OF CYTOCHROME C OXIDASE 1"/>
    <property type="match status" value="1"/>
</dbReference>
<dbReference type="Pfam" id="PF20772">
    <property type="entry name" value="TACO1_YebC_N"/>
    <property type="match status" value="1"/>
</dbReference>
<dbReference type="Pfam" id="PF01709">
    <property type="entry name" value="Transcrip_reg"/>
    <property type="match status" value="1"/>
</dbReference>
<dbReference type="SUPFAM" id="SSF75625">
    <property type="entry name" value="YebC-like"/>
    <property type="match status" value="1"/>
</dbReference>
<comment type="subcellular location">
    <subcellularLocation>
        <location evidence="1">Cytoplasm</location>
    </subcellularLocation>
</comment>
<comment type="similarity">
    <text evidence="1">Belongs to the TACO1 family.</text>
</comment>
<proteinExistence type="inferred from homology"/>
<sequence>MAGHSQFKNIMHKKGKQDAIRSKLFSKLAREITVAAKLGLPDPAMNARLRAAVLAARAENMPKDNIERAIKKASAADGENYDEVRYEGYAPGGVALIVEALTDNRNRTAGEVRSYFTKSGGSLAETGAVSFMFDHVGLIEFPASVASEEAMLEAAIEAGAEDVQSNEETHEIITSLESLRDVAQALETKFGEPRKASLIWKAQNAIAVDDEAGEKILRLVNLLEENDDVQNVYANFEVSDTLLAKLGD</sequence>
<keyword id="KW-0963">Cytoplasm</keyword>
<keyword id="KW-0238">DNA-binding</keyword>
<keyword id="KW-1185">Reference proteome</keyword>
<keyword id="KW-0804">Transcription</keyword>
<keyword id="KW-0805">Transcription regulation</keyword>
<feature type="chain" id="PRO_1000132155" description="Probable transcriptional regulatory protein Bind_0345">
    <location>
        <begin position="1"/>
        <end position="248"/>
    </location>
</feature>
<reference key="1">
    <citation type="journal article" date="2010" name="J. Bacteriol.">
        <title>Complete genome sequence of Beijerinckia indica subsp. indica.</title>
        <authorList>
            <person name="Tamas I."/>
            <person name="Dedysh S.N."/>
            <person name="Liesack W."/>
            <person name="Stott M.B."/>
            <person name="Alam M."/>
            <person name="Murrell J.C."/>
            <person name="Dunfield P.F."/>
        </authorList>
    </citation>
    <scope>NUCLEOTIDE SEQUENCE [LARGE SCALE GENOMIC DNA]</scope>
    <source>
        <strain>ATCC 9039 / DSM 1715 / NCIMB 8712</strain>
    </source>
</reference>
<organism>
    <name type="scientific">Beijerinckia indica subsp. indica (strain ATCC 9039 / DSM 1715 / NCIMB 8712)</name>
    <dbReference type="NCBI Taxonomy" id="395963"/>
    <lineage>
        <taxon>Bacteria</taxon>
        <taxon>Pseudomonadati</taxon>
        <taxon>Pseudomonadota</taxon>
        <taxon>Alphaproteobacteria</taxon>
        <taxon>Hyphomicrobiales</taxon>
        <taxon>Beijerinckiaceae</taxon>
        <taxon>Beijerinckia</taxon>
    </lineage>
</organism>